<accession>Q63TP8</accession>
<reference key="1">
    <citation type="journal article" date="2004" name="Proc. Natl. Acad. Sci. U.S.A.">
        <title>Genomic plasticity of the causative agent of melioidosis, Burkholderia pseudomallei.</title>
        <authorList>
            <person name="Holden M.T.G."/>
            <person name="Titball R.W."/>
            <person name="Peacock S.J."/>
            <person name="Cerdeno-Tarraga A.-M."/>
            <person name="Atkins T."/>
            <person name="Crossman L.C."/>
            <person name="Pitt T."/>
            <person name="Churcher C."/>
            <person name="Mungall K.L."/>
            <person name="Bentley S.D."/>
            <person name="Sebaihia M."/>
            <person name="Thomson N.R."/>
            <person name="Bason N."/>
            <person name="Beacham I.R."/>
            <person name="Brooks K."/>
            <person name="Brown K.A."/>
            <person name="Brown N.F."/>
            <person name="Challis G.L."/>
            <person name="Cherevach I."/>
            <person name="Chillingworth T."/>
            <person name="Cronin A."/>
            <person name="Crossett B."/>
            <person name="Davis P."/>
            <person name="DeShazer D."/>
            <person name="Feltwell T."/>
            <person name="Fraser A."/>
            <person name="Hance Z."/>
            <person name="Hauser H."/>
            <person name="Holroyd S."/>
            <person name="Jagels K."/>
            <person name="Keith K.E."/>
            <person name="Maddison M."/>
            <person name="Moule S."/>
            <person name="Price C."/>
            <person name="Quail M.A."/>
            <person name="Rabbinowitsch E."/>
            <person name="Rutherford K."/>
            <person name="Sanders M."/>
            <person name="Simmonds M."/>
            <person name="Songsivilai S."/>
            <person name="Stevens K."/>
            <person name="Tumapa S."/>
            <person name="Vesaratchavest M."/>
            <person name="Whitehead S."/>
            <person name="Yeats C."/>
            <person name="Barrell B.G."/>
            <person name="Oyston P.C.F."/>
            <person name="Parkhill J."/>
        </authorList>
    </citation>
    <scope>NUCLEOTIDE SEQUENCE [LARGE SCALE GENOMIC DNA]</scope>
    <source>
        <strain>K96243</strain>
    </source>
</reference>
<organism>
    <name type="scientific">Burkholderia pseudomallei (strain K96243)</name>
    <dbReference type="NCBI Taxonomy" id="272560"/>
    <lineage>
        <taxon>Bacteria</taxon>
        <taxon>Pseudomonadati</taxon>
        <taxon>Pseudomonadota</taxon>
        <taxon>Betaproteobacteria</taxon>
        <taxon>Burkholderiales</taxon>
        <taxon>Burkholderiaceae</taxon>
        <taxon>Burkholderia</taxon>
        <taxon>pseudomallei group</taxon>
    </lineage>
</organism>
<name>IF2_BURPS</name>
<evidence type="ECO:0000250" key="1"/>
<evidence type="ECO:0000255" key="2">
    <source>
        <dbReference type="HAMAP-Rule" id="MF_00100"/>
    </source>
</evidence>
<evidence type="ECO:0000256" key="3">
    <source>
        <dbReference type="SAM" id="MobiDB-lite"/>
    </source>
</evidence>
<comment type="function">
    <text evidence="2">One of the essential components for the initiation of protein synthesis. Protects formylmethionyl-tRNA from spontaneous hydrolysis and promotes its binding to the 30S ribosomal subunits. Also involved in the hydrolysis of GTP during the formation of the 70S ribosomal complex.</text>
</comment>
<comment type="subcellular location">
    <subcellularLocation>
        <location evidence="2">Cytoplasm</location>
    </subcellularLocation>
</comment>
<comment type="similarity">
    <text evidence="2">Belongs to the TRAFAC class translation factor GTPase superfamily. Classic translation factor GTPase family. IF-2 subfamily.</text>
</comment>
<sequence>MASNNVAQFAAELKMPAGVLLEQLQAAGVQKASEDDALSETDKARLLDHLRKSHGATDGDKRKITLTRRHTSEIKQADATGKARTIQVEVRKKRTFVKRDDVSETGADQAQAQTDEQAEAELKRREEEARREAELLEKQAQELRERQERLEREEAERRAREEAAEAERRRAEEEAAAKRAAAAQAEAAQQAAAAREQAQRAQSEPAEQSAQDEARAAAERAAQREAAKKAEDAAREAADKARAEQEEIRKRREAAEAEARAIREMMNTPRRAQVKAVEPPKPAEPPAAKAAEAKGTLHKPAKPAGEAAAARPAAKKPASGAPAPAAAPAGDRTKKPGTGKSGWQDDAAKRRGIKTRGDSSGGVDRGWRGGPKGRGKHQDSASSFQAPTEPIVREVHVPETISVADLAHKMSIKASEVIKVMMKMGQMVTINQVLDQETAMIVVEELGHRALAAKLDDPEALLVEGEIGSDAEQLPRPPVVTVMGHVDHGKTSLLDYIRRAKVAAGEAGGITQHIGAYHVETPRGVVTFLDTPGHEAFTAMRARGAKATDIVILVVAADDGVMPQTKEAISHAKAGGVPIVVAINKIDKPEANPDRVKQELVAEGVVPEEYGGDSPFVPVSAKTGAGIDDLLENVLLQAEVLELKAPVESPAKGIVIEAKLDKGKGPVATVLVQSGTLSRGDVVLAGTAYGRVRAMLDENGKPTKEAGPSIPVEIQGLSEVPGAGEEVIVLPDERKAREIALFRQGKFRDVKLAKQQAAKLESMLEQMGEGEVQNLPLIIKADVQGSQEALVQSLLKLSTDEVRVQIVHSAVGGISESDVNLATASKAVIIGFNTRADAQARKLAEANGIDIRYYNIIYDAVDEVKAAMSGMLAPEKREVVTGMVEVRQVFKVPKVGTVAGCMVTDGVVKRSSSVRVLRNNVVIFTGELDSLKRFKDDVKEVKQGFECGMSLKNFNDIVEGDQFEVFEVTEVARTL</sequence>
<feature type="chain" id="PRO_0000228178" description="Translation initiation factor IF-2">
    <location>
        <begin position="1"/>
        <end position="975"/>
    </location>
</feature>
<feature type="domain" description="tr-type G">
    <location>
        <begin position="475"/>
        <end position="644"/>
    </location>
</feature>
<feature type="region of interest" description="Disordered" evidence="3">
    <location>
        <begin position="48"/>
        <end position="84"/>
    </location>
</feature>
<feature type="region of interest" description="Disordered" evidence="3">
    <location>
        <begin position="96"/>
        <end position="388"/>
    </location>
</feature>
<feature type="region of interest" description="G1" evidence="1">
    <location>
        <begin position="484"/>
        <end position="491"/>
    </location>
</feature>
<feature type="region of interest" description="G2" evidence="1">
    <location>
        <begin position="509"/>
        <end position="513"/>
    </location>
</feature>
<feature type="region of interest" description="G3" evidence="1">
    <location>
        <begin position="530"/>
        <end position="533"/>
    </location>
</feature>
<feature type="region of interest" description="G4" evidence="1">
    <location>
        <begin position="584"/>
        <end position="587"/>
    </location>
</feature>
<feature type="region of interest" description="G5" evidence="1">
    <location>
        <begin position="620"/>
        <end position="622"/>
    </location>
</feature>
<feature type="compositionally biased region" description="Basic and acidic residues" evidence="3">
    <location>
        <begin position="48"/>
        <end position="63"/>
    </location>
</feature>
<feature type="compositionally biased region" description="Low complexity" evidence="3">
    <location>
        <begin position="104"/>
        <end position="115"/>
    </location>
</feature>
<feature type="compositionally biased region" description="Basic and acidic residues" evidence="3">
    <location>
        <begin position="120"/>
        <end position="177"/>
    </location>
</feature>
<feature type="compositionally biased region" description="Low complexity" evidence="3">
    <location>
        <begin position="178"/>
        <end position="211"/>
    </location>
</feature>
<feature type="compositionally biased region" description="Basic and acidic residues" evidence="3">
    <location>
        <begin position="212"/>
        <end position="263"/>
    </location>
</feature>
<feature type="compositionally biased region" description="Low complexity" evidence="3">
    <location>
        <begin position="302"/>
        <end position="330"/>
    </location>
</feature>
<feature type="compositionally biased region" description="Gly residues" evidence="3">
    <location>
        <begin position="359"/>
        <end position="372"/>
    </location>
</feature>
<feature type="binding site" evidence="2">
    <location>
        <begin position="484"/>
        <end position="491"/>
    </location>
    <ligand>
        <name>GTP</name>
        <dbReference type="ChEBI" id="CHEBI:37565"/>
    </ligand>
</feature>
<feature type="binding site" evidence="2">
    <location>
        <begin position="530"/>
        <end position="534"/>
    </location>
    <ligand>
        <name>GTP</name>
        <dbReference type="ChEBI" id="CHEBI:37565"/>
    </ligand>
</feature>
<feature type="binding site" evidence="2">
    <location>
        <begin position="584"/>
        <end position="587"/>
    </location>
    <ligand>
        <name>GTP</name>
        <dbReference type="ChEBI" id="CHEBI:37565"/>
    </ligand>
</feature>
<protein>
    <recommendedName>
        <fullName evidence="2">Translation initiation factor IF-2</fullName>
    </recommendedName>
</protein>
<gene>
    <name evidence="2" type="primary">infB</name>
    <name type="ordered locus">BPSL1918</name>
</gene>
<keyword id="KW-0963">Cytoplasm</keyword>
<keyword id="KW-0342">GTP-binding</keyword>
<keyword id="KW-0396">Initiation factor</keyword>
<keyword id="KW-0547">Nucleotide-binding</keyword>
<keyword id="KW-0648">Protein biosynthesis</keyword>
<keyword id="KW-1185">Reference proteome</keyword>
<proteinExistence type="inferred from homology"/>
<dbReference type="EMBL" id="BX571965">
    <property type="protein sequence ID" value="CAH35918.1"/>
    <property type="molecule type" value="Genomic_DNA"/>
</dbReference>
<dbReference type="RefSeq" id="WP_004526850.1">
    <property type="nucleotide sequence ID" value="NZ_CP009538.1"/>
</dbReference>
<dbReference type="RefSeq" id="YP_108518.1">
    <property type="nucleotide sequence ID" value="NC_006350.1"/>
</dbReference>
<dbReference type="SMR" id="Q63TP8"/>
<dbReference type="STRING" id="272560.BPSL1918"/>
<dbReference type="KEGG" id="bps:BPSL1918"/>
<dbReference type="PATRIC" id="fig|272560.51.peg.4062"/>
<dbReference type="eggNOG" id="COG0532">
    <property type="taxonomic scope" value="Bacteria"/>
</dbReference>
<dbReference type="Proteomes" id="UP000000605">
    <property type="component" value="Chromosome 1"/>
</dbReference>
<dbReference type="GO" id="GO:0005829">
    <property type="term" value="C:cytosol"/>
    <property type="evidence" value="ECO:0007669"/>
    <property type="project" value="TreeGrafter"/>
</dbReference>
<dbReference type="GO" id="GO:0005525">
    <property type="term" value="F:GTP binding"/>
    <property type="evidence" value="ECO:0007669"/>
    <property type="project" value="UniProtKB-KW"/>
</dbReference>
<dbReference type="GO" id="GO:0003924">
    <property type="term" value="F:GTPase activity"/>
    <property type="evidence" value="ECO:0007669"/>
    <property type="project" value="UniProtKB-UniRule"/>
</dbReference>
<dbReference type="GO" id="GO:0097216">
    <property type="term" value="F:guanosine tetraphosphate binding"/>
    <property type="evidence" value="ECO:0007669"/>
    <property type="project" value="UniProtKB-ARBA"/>
</dbReference>
<dbReference type="GO" id="GO:0003743">
    <property type="term" value="F:translation initiation factor activity"/>
    <property type="evidence" value="ECO:0007669"/>
    <property type="project" value="UniProtKB-UniRule"/>
</dbReference>
<dbReference type="CDD" id="cd01887">
    <property type="entry name" value="IF2_eIF5B"/>
    <property type="match status" value="1"/>
</dbReference>
<dbReference type="CDD" id="cd03702">
    <property type="entry name" value="IF2_mtIF2_II"/>
    <property type="match status" value="1"/>
</dbReference>
<dbReference type="CDD" id="cd03692">
    <property type="entry name" value="mtIF2_IVc"/>
    <property type="match status" value="1"/>
</dbReference>
<dbReference type="FunFam" id="2.40.30.10:FF:000007">
    <property type="entry name" value="Translation initiation factor IF-2"/>
    <property type="match status" value="1"/>
</dbReference>
<dbReference type="FunFam" id="2.40.30.10:FF:000008">
    <property type="entry name" value="Translation initiation factor IF-2"/>
    <property type="match status" value="1"/>
</dbReference>
<dbReference type="FunFam" id="3.40.50.10050:FF:000001">
    <property type="entry name" value="Translation initiation factor IF-2"/>
    <property type="match status" value="1"/>
</dbReference>
<dbReference type="FunFam" id="3.40.50.300:FF:000019">
    <property type="entry name" value="Translation initiation factor IF-2"/>
    <property type="match status" value="1"/>
</dbReference>
<dbReference type="Gene3D" id="3.40.50.300">
    <property type="entry name" value="P-loop containing nucleotide triphosphate hydrolases"/>
    <property type="match status" value="1"/>
</dbReference>
<dbReference type="Gene3D" id="3.30.56.50">
    <property type="entry name" value="Putative DNA-binding domain, N-terminal subdomain of bacterial translation initiation factor IF2"/>
    <property type="match status" value="1"/>
</dbReference>
<dbReference type="Gene3D" id="2.40.30.10">
    <property type="entry name" value="Translation factors"/>
    <property type="match status" value="2"/>
</dbReference>
<dbReference type="Gene3D" id="3.40.50.10050">
    <property type="entry name" value="Translation initiation factor IF- 2, domain 3"/>
    <property type="match status" value="1"/>
</dbReference>
<dbReference type="HAMAP" id="MF_00100_B">
    <property type="entry name" value="IF_2_B"/>
    <property type="match status" value="1"/>
</dbReference>
<dbReference type="InterPro" id="IPR009061">
    <property type="entry name" value="DNA-bd_dom_put_sf"/>
</dbReference>
<dbReference type="InterPro" id="IPR053905">
    <property type="entry name" value="EF-G-like_DII"/>
</dbReference>
<dbReference type="InterPro" id="IPR004161">
    <property type="entry name" value="EFTu-like_2"/>
</dbReference>
<dbReference type="InterPro" id="IPR013575">
    <property type="entry name" value="IF2_assoc_dom_bac"/>
</dbReference>
<dbReference type="InterPro" id="IPR044145">
    <property type="entry name" value="IF2_II"/>
</dbReference>
<dbReference type="InterPro" id="IPR006847">
    <property type="entry name" value="IF2_N"/>
</dbReference>
<dbReference type="InterPro" id="IPR027417">
    <property type="entry name" value="P-loop_NTPase"/>
</dbReference>
<dbReference type="InterPro" id="IPR005225">
    <property type="entry name" value="Small_GTP-bd"/>
</dbReference>
<dbReference type="InterPro" id="IPR000795">
    <property type="entry name" value="T_Tr_GTP-bd_dom"/>
</dbReference>
<dbReference type="InterPro" id="IPR000178">
    <property type="entry name" value="TF_IF2_bacterial-like"/>
</dbReference>
<dbReference type="InterPro" id="IPR015760">
    <property type="entry name" value="TIF_IF2"/>
</dbReference>
<dbReference type="InterPro" id="IPR023115">
    <property type="entry name" value="TIF_IF2_dom3"/>
</dbReference>
<dbReference type="InterPro" id="IPR036925">
    <property type="entry name" value="TIF_IF2_dom3_sf"/>
</dbReference>
<dbReference type="InterPro" id="IPR009000">
    <property type="entry name" value="Transl_B-barrel_sf"/>
</dbReference>
<dbReference type="NCBIfam" id="TIGR00487">
    <property type="entry name" value="IF-2"/>
    <property type="match status" value="1"/>
</dbReference>
<dbReference type="NCBIfam" id="TIGR00231">
    <property type="entry name" value="small_GTP"/>
    <property type="match status" value="1"/>
</dbReference>
<dbReference type="PANTHER" id="PTHR43381:SF5">
    <property type="entry name" value="TR-TYPE G DOMAIN-CONTAINING PROTEIN"/>
    <property type="match status" value="1"/>
</dbReference>
<dbReference type="PANTHER" id="PTHR43381">
    <property type="entry name" value="TRANSLATION INITIATION FACTOR IF-2-RELATED"/>
    <property type="match status" value="1"/>
</dbReference>
<dbReference type="Pfam" id="PF22042">
    <property type="entry name" value="EF-G_D2"/>
    <property type="match status" value="1"/>
</dbReference>
<dbReference type="Pfam" id="PF00009">
    <property type="entry name" value="GTP_EFTU"/>
    <property type="match status" value="1"/>
</dbReference>
<dbReference type="Pfam" id="PF03144">
    <property type="entry name" value="GTP_EFTU_D2"/>
    <property type="match status" value="1"/>
</dbReference>
<dbReference type="Pfam" id="PF11987">
    <property type="entry name" value="IF-2"/>
    <property type="match status" value="1"/>
</dbReference>
<dbReference type="Pfam" id="PF08364">
    <property type="entry name" value="IF2_assoc"/>
    <property type="match status" value="1"/>
</dbReference>
<dbReference type="Pfam" id="PF04760">
    <property type="entry name" value="IF2_N"/>
    <property type="match status" value="2"/>
</dbReference>
<dbReference type="SUPFAM" id="SSF52156">
    <property type="entry name" value="Initiation factor IF2/eIF5b, domain 3"/>
    <property type="match status" value="1"/>
</dbReference>
<dbReference type="SUPFAM" id="SSF52540">
    <property type="entry name" value="P-loop containing nucleoside triphosphate hydrolases"/>
    <property type="match status" value="1"/>
</dbReference>
<dbReference type="SUPFAM" id="SSF46955">
    <property type="entry name" value="Putative DNA-binding domain"/>
    <property type="match status" value="1"/>
</dbReference>
<dbReference type="SUPFAM" id="SSF50447">
    <property type="entry name" value="Translation proteins"/>
    <property type="match status" value="2"/>
</dbReference>
<dbReference type="PROSITE" id="PS51722">
    <property type="entry name" value="G_TR_2"/>
    <property type="match status" value="1"/>
</dbReference>
<dbReference type="PROSITE" id="PS01176">
    <property type="entry name" value="IF2"/>
    <property type="match status" value="1"/>
</dbReference>